<keyword id="KW-0067">ATP-binding</keyword>
<keyword id="KW-0436">Ligase</keyword>
<keyword id="KW-0496">Mitochondrion</keyword>
<keyword id="KW-0547">Nucleotide-binding</keyword>
<keyword id="KW-0648">Protein biosynthesis</keyword>
<sequence>MSLLREAERCLVNRKAFASLNAFVTPLDRVGSWIERVKDADARRKRGAPKSSLDGKLIAIKDNICTRDVRTTCASAILENFTSPFNATVVELLEESGAIVAGKTNLDEFGMGSHSTYSHFGPVKGVRADDLGYVSAGGSSGGSAIAVATEQCYAALGTDTGGSVRLPAAYTGTVGFKPSYGLLSRWGVVAYANSLDTVGIIGANTSTVSEVFGVLNRYDHRDPTSISKATRSRIDEITGSTSKTRSERLRIGVPIEYNILELDPFVRETWRKSIQHLKNQGHTVHPVSLPATKQALSAYYVLAPAEASSNLAKYDGVRYGTRDLDSPDNTGGYLYARSRGSGFGPEVKRRIVLGAFSLSAEAIDNYFIQAQKVRRLVQSDFNKVFRLHNPLLQATLTSHPKALESDGDTAEKVDVLVCPTAPSPPPLLCSLENAAPTEAYTNDVFTVPASLAGLPALSVPVTPGDREQESPLGIQVIGQFGDDQLVLDVGSRLEKMNIQ</sequence>
<gene>
    <name type="ORF">CPC735_061260</name>
</gene>
<comment type="function">
    <text evidence="1">Allows the formation of correctly charged Gln-tRNA(Gln) through the transamidation of misacylated Glu-tRNA(Gln) in the mitochondria. The reaction takes place in the presence of glutamine and ATP through an activated gamma-phospho-Glu-tRNA(Gln).</text>
</comment>
<comment type="catalytic activity">
    <reaction evidence="1">
        <text>L-glutamyl-tRNA(Gln) + L-glutamine + ATP + H2O = L-glutaminyl-tRNA(Gln) + L-glutamate + ADP + phosphate + H(+)</text>
        <dbReference type="Rhea" id="RHEA:17521"/>
        <dbReference type="Rhea" id="RHEA-COMP:9681"/>
        <dbReference type="Rhea" id="RHEA-COMP:9684"/>
        <dbReference type="ChEBI" id="CHEBI:15377"/>
        <dbReference type="ChEBI" id="CHEBI:15378"/>
        <dbReference type="ChEBI" id="CHEBI:29985"/>
        <dbReference type="ChEBI" id="CHEBI:30616"/>
        <dbReference type="ChEBI" id="CHEBI:43474"/>
        <dbReference type="ChEBI" id="CHEBI:58359"/>
        <dbReference type="ChEBI" id="CHEBI:78520"/>
        <dbReference type="ChEBI" id="CHEBI:78521"/>
        <dbReference type="ChEBI" id="CHEBI:456216"/>
        <dbReference type="EC" id="6.3.5.7"/>
    </reaction>
</comment>
<comment type="subunit">
    <text evidence="1">Subunit of the heterotrimeric GatCAB amidotransferase (AdT) complex, composed of A, B and C subunits.</text>
</comment>
<comment type="subcellular location">
    <subcellularLocation>
        <location evidence="1">Mitochondrion</location>
    </subcellularLocation>
</comment>
<comment type="similarity">
    <text evidence="1">Belongs to the amidase family. GatA subfamily.</text>
</comment>
<organism>
    <name type="scientific">Coccidioides posadasii (strain C735)</name>
    <name type="common">Valley fever fungus</name>
    <dbReference type="NCBI Taxonomy" id="222929"/>
    <lineage>
        <taxon>Eukaryota</taxon>
        <taxon>Fungi</taxon>
        <taxon>Dikarya</taxon>
        <taxon>Ascomycota</taxon>
        <taxon>Pezizomycotina</taxon>
        <taxon>Eurotiomycetes</taxon>
        <taxon>Eurotiomycetidae</taxon>
        <taxon>Onygenales</taxon>
        <taxon>Onygenaceae</taxon>
        <taxon>Coccidioides</taxon>
    </lineage>
</organism>
<accession>C5P3I5</accession>
<reference key="1">
    <citation type="journal article" date="2009" name="Genome Res.">
        <title>Comparative genomic analyses of the human fungal pathogens Coccidioides and their relatives.</title>
        <authorList>
            <person name="Sharpton T.J."/>
            <person name="Stajich J.E."/>
            <person name="Rounsley S.D."/>
            <person name="Gardner M.J."/>
            <person name="Wortman J.R."/>
            <person name="Jordar V.S."/>
            <person name="Maiti R."/>
            <person name="Kodira C.D."/>
            <person name="Neafsey D.E."/>
            <person name="Zeng Q."/>
            <person name="Hung C.-Y."/>
            <person name="McMahan C."/>
            <person name="Muszewska A."/>
            <person name="Grynberg M."/>
            <person name="Mandel M.A."/>
            <person name="Kellner E.M."/>
            <person name="Barker B.M."/>
            <person name="Galgiani J.N."/>
            <person name="Orbach M.J."/>
            <person name="Kirkland T.N."/>
            <person name="Cole G.T."/>
            <person name="Henn M.R."/>
            <person name="Birren B.W."/>
            <person name="Taylor J.W."/>
        </authorList>
    </citation>
    <scope>NUCLEOTIDE SEQUENCE [LARGE SCALE GENOMIC DNA]</scope>
    <source>
        <strain>C735</strain>
    </source>
</reference>
<feature type="chain" id="PRO_0000413351" description="Glutamyl-tRNA(Gln) amidotransferase subunit A, mitochondrial">
    <location>
        <begin position="1"/>
        <end position="499"/>
    </location>
</feature>
<feature type="active site" description="Charge relay system" evidence="1">
    <location>
        <position position="61"/>
    </location>
</feature>
<feature type="active site" description="Charge relay system" evidence="1">
    <location>
        <position position="139"/>
    </location>
</feature>
<feature type="active site" description="Acyl-ester intermediate" evidence="1">
    <location>
        <position position="163"/>
    </location>
</feature>
<name>GATA_COCP7</name>
<proteinExistence type="inferred from homology"/>
<dbReference type="EC" id="6.3.5.7" evidence="1"/>
<dbReference type="EMBL" id="ACFW01000015">
    <property type="protein sequence ID" value="EER28253.1"/>
    <property type="molecule type" value="Genomic_DNA"/>
</dbReference>
<dbReference type="RefSeq" id="XP_003070398.1">
    <property type="nucleotide sequence ID" value="XM_003070352.1"/>
</dbReference>
<dbReference type="SMR" id="C5P3I5"/>
<dbReference type="KEGG" id="cpw:9695893"/>
<dbReference type="VEuPathDB" id="FungiDB:CPC735_061260"/>
<dbReference type="HOGENOM" id="CLU_009600_7_6_1"/>
<dbReference type="OrthoDB" id="421993at2759"/>
<dbReference type="Proteomes" id="UP000009084">
    <property type="component" value="Unassembled WGS sequence"/>
</dbReference>
<dbReference type="GO" id="GO:0030956">
    <property type="term" value="C:glutamyl-tRNA(Gln) amidotransferase complex"/>
    <property type="evidence" value="ECO:0007669"/>
    <property type="project" value="UniProtKB-UniRule"/>
</dbReference>
<dbReference type="GO" id="GO:0005739">
    <property type="term" value="C:mitochondrion"/>
    <property type="evidence" value="ECO:0007669"/>
    <property type="project" value="UniProtKB-SubCell"/>
</dbReference>
<dbReference type="GO" id="GO:0005524">
    <property type="term" value="F:ATP binding"/>
    <property type="evidence" value="ECO:0007669"/>
    <property type="project" value="UniProtKB-KW"/>
</dbReference>
<dbReference type="GO" id="GO:0050567">
    <property type="term" value="F:glutaminyl-tRNA synthase (glutamine-hydrolyzing) activity"/>
    <property type="evidence" value="ECO:0007669"/>
    <property type="project" value="UniProtKB-UniRule"/>
</dbReference>
<dbReference type="GO" id="GO:0070681">
    <property type="term" value="P:glutaminyl-tRNAGln biosynthesis via transamidation"/>
    <property type="evidence" value="ECO:0007669"/>
    <property type="project" value="UniProtKB-UniRule"/>
</dbReference>
<dbReference type="GO" id="GO:0032543">
    <property type="term" value="P:mitochondrial translation"/>
    <property type="evidence" value="ECO:0007669"/>
    <property type="project" value="UniProtKB-UniRule"/>
</dbReference>
<dbReference type="Gene3D" id="3.90.1300.10">
    <property type="entry name" value="Amidase signature (AS) domain"/>
    <property type="match status" value="1"/>
</dbReference>
<dbReference type="HAMAP" id="MF_00120">
    <property type="entry name" value="GatA"/>
    <property type="match status" value="1"/>
</dbReference>
<dbReference type="InterPro" id="IPR000120">
    <property type="entry name" value="Amidase"/>
</dbReference>
<dbReference type="InterPro" id="IPR023631">
    <property type="entry name" value="Amidase_dom"/>
</dbReference>
<dbReference type="InterPro" id="IPR036928">
    <property type="entry name" value="AS_sf"/>
</dbReference>
<dbReference type="InterPro" id="IPR004412">
    <property type="entry name" value="GatA"/>
</dbReference>
<dbReference type="NCBIfam" id="TIGR00132">
    <property type="entry name" value="gatA"/>
    <property type="match status" value="1"/>
</dbReference>
<dbReference type="PANTHER" id="PTHR11895:SF7">
    <property type="entry name" value="GLUTAMYL-TRNA(GLN) AMIDOTRANSFERASE SUBUNIT A, MITOCHONDRIAL"/>
    <property type="match status" value="1"/>
</dbReference>
<dbReference type="PANTHER" id="PTHR11895">
    <property type="entry name" value="TRANSAMIDASE"/>
    <property type="match status" value="1"/>
</dbReference>
<dbReference type="Pfam" id="PF01425">
    <property type="entry name" value="Amidase"/>
    <property type="match status" value="1"/>
</dbReference>
<dbReference type="SUPFAM" id="SSF75304">
    <property type="entry name" value="Amidase signature (AS) enzymes"/>
    <property type="match status" value="1"/>
</dbReference>
<protein>
    <recommendedName>
        <fullName evidence="1">Glutamyl-tRNA(Gln) amidotransferase subunit A, mitochondrial</fullName>
        <shortName evidence="1">Glu-AdT subunit A</shortName>
        <ecNumber evidence="1">6.3.5.7</ecNumber>
    </recommendedName>
</protein>
<evidence type="ECO:0000255" key="1">
    <source>
        <dbReference type="HAMAP-Rule" id="MF_03150"/>
    </source>
</evidence>